<evidence type="ECO:0000255" key="1">
    <source>
        <dbReference type="HAMAP-Rule" id="MF_00046"/>
    </source>
</evidence>
<proteinExistence type="inferred from homology"/>
<sequence>MNKKLGHKDHFHFIGIGGIGMSAIAMALIKKGYSVSGSDLIQNKETKSLKTLGAIIFDSQIKKNIDFVISKFQDHTLNCVISSAIKDENEELCFCKKNNLSIKHRSEILAMIMNSYTSLSIAGSHGKTSTSTFLSTLLELCTHDSSSITGGIIPIYDSNAHIENTKYLVTEIDESDGTIKNYNSDIGIINNIDFDHCDHYSNIDEVLSSFKKFASNCQKLLINYDCKFTKNNFTSKNQWSIKESNNIAYSLIPNIINKDKTVGKYYEHGKFIDIINIPVPGLHNLSNITAAIAACRMVGVSFKEIKKNTESLKLPKKRFEFRGEINQRIIYDDYAHHPNEIKATIDLARLFIKDKNSSDREEKGRLIAIFQPHRFTRVKQFIHEFVKELSKADVIYVTNIFGAGEKNIDNIDSQLIANLIYKNNKNVTCLKDNYEINEKFFKLTKKNDFIINMGAGDCHNLWSILKNKNTLNN</sequence>
<gene>
    <name evidence="1" type="primary">murC</name>
    <name type="ordered locus">PMM0022</name>
</gene>
<feature type="chain" id="PRO_0000182133" description="UDP-N-acetylmuramate--L-alanine ligase">
    <location>
        <begin position="1"/>
        <end position="473"/>
    </location>
</feature>
<feature type="binding site" evidence="1">
    <location>
        <begin position="123"/>
        <end position="129"/>
    </location>
    <ligand>
        <name>ATP</name>
        <dbReference type="ChEBI" id="CHEBI:30616"/>
    </ligand>
</feature>
<comment type="function">
    <text evidence="1">Cell wall formation.</text>
</comment>
<comment type="catalytic activity">
    <reaction evidence="1">
        <text>UDP-N-acetyl-alpha-D-muramate + L-alanine + ATP = UDP-N-acetyl-alpha-D-muramoyl-L-alanine + ADP + phosphate + H(+)</text>
        <dbReference type="Rhea" id="RHEA:23372"/>
        <dbReference type="ChEBI" id="CHEBI:15378"/>
        <dbReference type="ChEBI" id="CHEBI:30616"/>
        <dbReference type="ChEBI" id="CHEBI:43474"/>
        <dbReference type="ChEBI" id="CHEBI:57972"/>
        <dbReference type="ChEBI" id="CHEBI:70757"/>
        <dbReference type="ChEBI" id="CHEBI:83898"/>
        <dbReference type="ChEBI" id="CHEBI:456216"/>
        <dbReference type="EC" id="6.3.2.8"/>
    </reaction>
</comment>
<comment type="pathway">
    <text evidence="1">Cell wall biogenesis; peptidoglycan biosynthesis.</text>
</comment>
<comment type="subcellular location">
    <subcellularLocation>
        <location evidence="1">Cytoplasm</location>
    </subcellularLocation>
</comment>
<comment type="similarity">
    <text evidence="1">Belongs to the MurCDEF family.</text>
</comment>
<accession>Q7V3P8</accession>
<reference key="1">
    <citation type="journal article" date="2003" name="Nature">
        <title>Genome divergence in two Prochlorococcus ecotypes reflects oceanic niche differentiation.</title>
        <authorList>
            <person name="Rocap G."/>
            <person name="Larimer F.W."/>
            <person name="Lamerdin J.E."/>
            <person name="Malfatti S."/>
            <person name="Chain P."/>
            <person name="Ahlgren N.A."/>
            <person name="Arellano A."/>
            <person name="Coleman M."/>
            <person name="Hauser L."/>
            <person name="Hess W.R."/>
            <person name="Johnson Z.I."/>
            <person name="Land M.L."/>
            <person name="Lindell D."/>
            <person name="Post A.F."/>
            <person name="Regala W."/>
            <person name="Shah M."/>
            <person name="Shaw S.L."/>
            <person name="Steglich C."/>
            <person name="Sullivan M.B."/>
            <person name="Ting C.S."/>
            <person name="Tolonen A."/>
            <person name="Webb E.A."/>
            <person name="Zinser E.R."/>
            <person name="Chisholm S.W."/>
        </authorList>
    </citation>
    <scope>NUCLEOTIDE SEQUENCE [LARGE SCALE GENOMIC DNA]</scope>
    <source>
        <strain>CCMP1986 / NIES-2087 / MED4</strain>
    </source>
</reference>
<protein>
    <recommendedName>
        <fullName evidence="1">UDP-N-acetylmuramate--L-alanine ligase</fullName>
        <ecNumber evidence="1">6.3.2.8</ecNumber>
    </recommendedName>
    <alternativeName>
        <fullName evidence="1">UDP-N-acetylmuramoyl-L-alanine synthetase</fullName>
    </alternativeName>
</protein>
<dbReference type="EC" id="6.3.2.8" evidence="1"/>
<dbReference type="EMBL" id="BX548174">
    <property type="protein sequence ID" value="CAE18481.1"/>
    <property type="molecule type" value="Genomic_DNA"/>
</dbReference>
<dbReference type="RefSeq" id="WP_011131660.1">
    <property type="nucleotide sequence ID" value="NC_005072.1"/>
</dbReference>
<dbReference type="SMR" id="Q7V3P8"/>
<dbReference type="STRING" id="59919.PMM0022"/>
<dbReference type="KEGG" id="pmm:PMM0022"/>
<dbReference type="eggNOG" id="COG0773">
    <property type="taxonomic scope" value="Bacteria"/>
</dbReference>
<dbReference type="HOGENOM" id="CLU_028104_2_2_3"/>
<dbReference type="OrthoDB" id="9804126at2"/>
<dbReference type="UniPathway" id="UPA00219"/>
<dbReference type="Proteomes" id="UP000001026">
    <property type="component" value="Chromosome"/>
</dbReference>
<dbReference type="GO" id="GO:0005737">
    <property type="term" value="C:cytoplasm"/>
    <property type="evidence" value="ECO:0007669"/>
    <property type="project" value="UniProtKB-SubCell"/>
</dbReference>
<dbReference type="GO" id="GO:0005524">
    <property type="term" value="F:ATP binding"/>
    <property type="evidence" value="ECO:0007669"/>
    <property type="project" value="UniProtKB-UniRule"/>
</dbReference>
<dbReference type="GO" id="GO:0008763">
    <property type="term" value="F:UDP-N-acetylmuramate-L-alanine ligase activity"/>
    <property type="evidence" value="ECO:0007669"/>
    <property type="project" value="UniProtKB-UniRule"/>
</dbReference>
<dbReference type="GO" id="GO:0051301">
    <property type="term" value="P:cell division"/>
    <property type="evidence" value="ECO:0007669"/>
    <property type="project" value="UniProtKB-KW"/>
</dbReference>
<dbReference type="GO" id="GO:0071555">
    <property type="term" value="P:cell wall organization"/>
    <property type="evidence" value="ECO:0007669"/>
    <property type="project" value="UniProtKB-KW"/>
</dbReference>
<dbReference type="GO" id="GO:0009252">
    <property type="term" value="P:peptidoglycan biosynthetic process"/>
    <property type="evidence" value="ECO:0007669"/>
    <property type="project" value="UniProtKB-UniRule"/>
</dbReference>
<dbReference type="GO" id="GO:0008360">
    <property type="term" value="P:regulation of cell shape"/>
    <property type="evidence" value="ECO:0007669"/>
    <property type="project" value="UniProtKB-KW"/>
</dbReference>
<dbReference type="Gene3D" id="3.90.190.20">
    <property type="entry name" value="Mur ligase, C-terminal domain"/>
    <property type="match status" value="1"/>
</dbReference>
<dbReference type="Gene3D" id="3.40.1190.10">
    <property type="entry name" value="Mur-like, catalytic domain"/>
    <property type="match status" value="1"/>
</dbReference>
<dbReference type="Gene3D" id="3.40.50.720">
    <property type="entry name" value="NAD(P)-binding Rossmann-like Domain"/>
    <property type="match status" value="1"/>
</dbReference>
<dbReference type="HAMAP" id="MF_00046">
    <property type="entry name" value="MurC"/>
    <property type="match status" value="1"/>
</dbReference>
<dbReference type="InterPro" id="IPR036565">
    <property type="entry name" value="Mur-like_cat_sf"/>
</dbReference>
<dbReference type="InterPro" id="IPR004101">
    <property type="entry name" value="Mur_ligase_C"/>
</dbReference>
<dbReference type="InterPro" id="IPR036615">
    <property type="entry name" value="Mur_ligase_C_dom_sf"/>
</dbReference>
<dbReference type="InterPro" id="IPR013221">
    <property type="entry name" value="Mur_ligase_cen"/>
</dbReference>
<dbReference type="InterPro" id="IPR000713">
    <property type="entry name" value="Mur_ligase_N"/>
</dbReference>
<dbReference type="InterPro" id="IPR050061">
    <property type="entry name" value="MurCDEF_pg_biosynth"/>
</dbReference>
<dbReference type="InterPro" id="IPR005758">
    <property type="entry name" value="UDP-N-AcMur_Ala_ligase_MurC"/>
</dbReference>
<dbReference type="NCBIfam" id="TIGR01082">
    <property type="entry name" value="murC"/>
    <property type="match status" value="1"/>
</dbReference>
<dbReference type="PANTHER" id="PTHR43445:SF3">
    <property type="entry name" value="UDP-N-ACETYLMURAMATE--L-ALANINE LIGASE"/>
    <property type="match status" value="1"/>
</dbReference>
<dbReference type="PANTHER" id="PTHR43445">
    <property type="entry name" value="UDP-N-ACETYLMURAMATE--L-ALANINE LIGASE-RELATED"/>
    <property type="match status" value="1"/>
</dbReference>
<dbReference type="Pfam" id="PF01225">
    <property type="entry name" value="Mur_ligase"/>
    <property type="match status" value="1"/>
</dbReference>
<dbReference type="Pfam" id="PF02875">
    <property type="entry name" value="Mur_ligase_C"/>
    <property type="match status" value="1"/>
</dbReference>
<dbReference type="Pfam" id="PF08245">
    <property type="entry name" value="Mur_ligase_M"/>
    <property type="match status" value="1"/>
</dbReference>
<dbReference type="SUPFAM" id="SSF51984">
    <property type="entry name" value="MurCD N-terminal domain"/>
    <property type="match status" value="1"/>
</dbReference>
<dbReference type="SUPFAM" id="SSF53623">
    <property type="entry name" value="MurD-like peptide ligases, catalytic domain"/>
    <property type="match status" value="1"/>
</dbReference>
<dbReference type="SUPFAM" id="SSF53244">
    <property type="entry name" value="MurD-like peptide ligases, peptide-binding domain"/>
    <property type="match status" value="1"/>
</dbReference>
<organism>
    <name type="scientific">Prochlorococcus marinus subsp. pastoris (strain CCMP1986 / NIES-2087 / MED4)</name>
    <dbReference type="NCBI Taxonomy" id="59919"/>
    <lineage>
        <taxon>Bacteria</taxon>
        <taxon>Bacillati</taxon>
        <taxon>Cyanobacteriota</taxon>
        <taxon>Cyanophyceae</taxon>
        <taxon>Synechococcales</taxon>
        <taxon>Prochlorococcaceae</taxon>
        <taxon>Prochlorococcus</taxon>
    </lineage>
</organism>
<keyword id="KW-0067">ATP-binding</keyword>
<keyword id="KW-0131">Cell cycle</keyword>
<keyword id="KW-0132">Cell division</keyword>
<keyword id="KW-0133">Cell shape</keyword>
<keyword id="KW-0961">Cell wall biogenesis/degradation</keyword>
<keyword id="KW-0963">Cytoplasm</keyword>
<keyword id="KW-0436">Ligase</keyword>
<keyword id="KW-0547">Nucleotide-binding</keyword>
<keyword id="KW-0573">Peptidoglycan synthesis</keyword>
<name>MURC_PROMP</name>